<gene>
    <name type="primary">PER39</name>
    <name type="synonym">P39</name>
    <name type="ordered locus">At4g11290</name>
    <name type="ORF">F8L21.80</name>
</gene>
<accession>Q9SUT2</accession>
<accession>Q96508</accession>
<reference key="1">
    <citation type="submission" date="1996-06" db="EMBL/GenBank/DDBJ databases">
        <title>From expressed sequence tags to structure, function, evolution and expression of 28 ER-targeted Arabidopsis peroxidases.</title>
        <authorList>
            <person name="Welinder K.G."/>
            <person name="Jespersen H.M."/>
            <person name="Kjaersgaard I.V.H."/>
            <person name="Justesen A.F."/>
            <person name="Oestergaard L."/>
            <person name="Abelskov A.K."/>
            <person name="Hansen L.N."/>
            <person name="Rasmussen S.K."/>
        </authorList>
    </citation>
    <scope>NUCLEOTIDE SEQUENCE [MRNA]</scope>
    <source>
        <strain>cv. Columbia</strain>
    </source>
</reference>
<reference key="2">
    <citation type="journal article" date="1999" name="Nature">
        <title>Sequence and analysis of chromosome 4 of the plant Arabidopsis thaliana.</title>
        <authorList>
            <person name="Mayer K.F.X."/>
            <person name="Schueller C."/>
            <person name="Wambutt R."/>
            <person name="Murphy G."/>
            <person name="Volckaert G."/>
            <person name="Pohl T."/>
            <person name="Duesterhoeft A."/>
            <person name="Stiekema W."/>
            <person name="Entian K.-D."/>
            <person name="Terryn N."/>
            <person name="Harris B."/>
            <person name="Ansorge W."/>
            <person name="Brandt P."/>
            <person name="Grivell L.A."/>
            <person name="Rieger M."/>
            <person name="Weichselgartner M."/>
            <person name="de Simone V."/>
            <person name="Obermaier B."/>
            <person name="Mache R."/>
            <person name="Mueller M."/>
            <person name="Kreis M."/>
            <person name="Delseny M."/>
            <person name="Puigdomenech P."/>
            <person name="Watson M."/>
            <person name="Schmidtheini T."/>
            <person name="Reichert B."/>
            <person name="Portetelle D."/>
            <person name="Perez-Alonso M."/>
            <person name="Boutry M."/>
            <person name="Bancroft I."/>
            <person name="Vos P."/>
            <person name="Hoheisel J."/>
            <person name="Zimmermann W."/>
            <person name="Wedler H."/>
            <person name="Ridley P."/>
            <person name="Langham S.-A."/>
            <person name="McCullagh B."/>
            <person name="Bilham L."/>
            <person name="Robben J."/>
            <person name="van der Schueren J."/>
            <person name="Grymonprez B."/>
            <person name="Chuang Y.-J."/>
            <person name="Vandenbussche F."/>
            <person name="Braeken M."/>
            <person name="Weltjens I."/>
            <person name="Voet M."/>
            <person name="Bastiaens I."/>
            <person name="Aert R."/>
            <person name="Defoor E."/>
            <person name="Weitzenegger T."/>
            <person name="Bothe G."/>
            <person name="Ramsperger U."/>
            <person name="Hilbert H."/>
            <person name="Braun M."/>
            <person name="Holzer E."/>
            <person name="Brandt A."/>
            <person name="Peters S."/>
            <person name="van Staveren M."/>
            <person name="Dirkse W."/>
            <person name="Mooijman P."/>
            <person name="Klein Lankhorst R."/>
            <person name="Rose M."/>
            <person name="Hauf J."/>
            <person name="Koetter P."/>
            <person name="Berneiser S."/>
            <person name="Hempel S."/>
            <person name="Feldpausch M."/>
            <person name="Lamberth S."/>
            <person name="Van den Daele H."/>
            <person name="De Keyser A."/>
            <person name="Buysshaert C."/>
            <person name="Gielen J."/>
            <person name="Villarroel R."/>
            <person name="De Clercq R."/>
            <person name="van Montagu M."/>
            <person name="Rogers J."/>
            <person name="Cronin A."/>
            <person name="Quail M.A."/>
            <person name="Bray-Allen S."/>
            <person name="Clark L."/>
            <person name="Doggett J."/>
            <person name="Hall S."/>
            <person name="Kay M."/>
            <person name="Lennard N."/>
            <person name="McLay K."/>
            <person name="Mayes R."/>
            <person name="Pettett A."/>
            <person name="Rajandream M.A."/>
            <person name="Lyne M."/>
            <person name="Benes V."/>
            <person name="Rechmann S."/>
            <person name="Borkova D."/>
            <person name="Bloecker H."/>
            <person name="Scharfe M."/>
            <person name="Grimm M."/>
            <person name="Loehnert T.-H."/>
            <person name="Dose S."/>
            <person name="de Haan M."/>
            <person name="Maarse A.C."/>
            <person name="Schaefer M."/>
            <person name="Mueller-Auer S."/>
            <person name="Gabel C."/>
            <person name="Fuchs M."/>
            <person name="Fartmann B."/>
            <person name="Granderath K."/>
            <person name="Dauner D."/>
            <person name="Herzl A."/>
            <person name="Neumann S."/>
            <person name="Argiriou A."/>
            <person name="Vitale D."/>
            <person name="Liguori R."/>
            <person name="Piravandi E."/>
            <person name="Massenet O."/>
            <person name="Quigley F."/>
            <person name="Clabauld G."/>
            <person name="Muendlein A."/>
            <person name="Felber R."/>
            <person name="Schnabl S."/>
            <person name="Hiller R."/>
            <person name="Schmidt W."/>
            <person name="Lecharny A."/>
            <person name="Aubourg S."/>
            <person name="Chefdor F."/>
            <person name="Cooke R."/>
            <person name="Berger C."/>
            <person name="Monfort A."/>
            <person name="Casacuberta E."/>
            <person name="Gibbons T."/>
            <person name="Weber N."/>
            <person name="Vandenbol M."/>
            <person name="Bargues M."/>
            <person name="Terol J."/>
            <person name="Torres A."/>
            <person name="Perez-Perez A."/>
            <person name="Purnelle B."/>
            <person name="Bent E."/>
            <person name="Johnson S."/>
            <person name="Tacon D."/>
            <person name="Jesse T."/>
            <person name="Heijnen L."/>
            <person name="Schwarz S."/>
            <person name="Scholler P."/>
            <person name="Heber S."/>
            <person name="Francs P."/>
            <person name="Bielke C."/>
            <person name="Frishman D."/>
            <person name="Haase D."/>
            <person name="Lemcke K."/>
            <person name="Mewes H.-W."/>
            <person name="Stocker S."/>
            <person name="Zaccaria P."/>
            <person name="Bevan M."/>
            <person name="Wilson R.K."/>
            <person name="de la Bastide M."/>
            <person name="Habermann K."/>
            <person name="Parnell L."/>
            <person name="Dedhia N."/>
            <person name="Gnoj L."/>
            <person name="Schutz K."/>
            <person name="Huang E."/>
            <person name="Spiegel L."/>
            <person name="Sekhon M."/>
            <person name="Murray J."/>
            <person name="Sheet P."/>
            <person name="Cordes M."/>
            <person name="Abu-Threideh J."/>
            <person name="Stoneking T."/>
            <person name="Kalicki J."/>
            <person name="Graves T."/>
            <person name="Harmon G."/>
            <person name="Edwards J."/>
            <person name="Latreille P."/>
            <person name="Courtney L."/>
            <person name="Cloud J."/>
            <person name="Abbott A."/>
            <person name="Scott K."/>
            <person name="Johnson D."/>
            <person name="Minx P."/>
            <person name="Bentley D."/>
            <person name="Fulton B."/>
            <person name="Miller N."/>
            <person name="Greco T."/>
            <person name="Kemp K."/>
            <person name="Kramer J."/>
            <person name="Fulton L."/>
            <person name="Mardis E."/>
            <person name="Dante M."/>
            <person name="Pepin K."/>
            <person name="Hillier L.W."/>
            <person name="Nelson J."/>
            <person name="Spieth J."/>
            <person name="Ryan E."/>
            <person name="Andrews S."/>
            <person name="Geisel C."/>
            <person name="Layman D."/>
            <person name="Du H."/>
            <person name="Ali J."/>
            <person name="Berghoff A."/>
            <person name="Jones K."/>
            <person name="Drone K."/>
            <person name="Cotton M."/>
            <person name="Joshu C."/>
            <person name="Antonoiu B."/>
            <person name="Zidanic M."/>
            <person name="Strong C."/>
            <person name="Sun H."/>
            <person name="Lamar B."/>
            <person name="Yordan C."/>
            <person name="Ma P."/>
            <person name="Zhong J."/>
            <person name="Preston R."/>
            <person name="Vil D."/>
            <person name="Shekher M."/>
            <person name="Matero A."/>
            <person name="Shah R."/>
            <person name="Swaby I.K."/>
            <person name="O'Shaughnessy A."/>
            <person name="Rodriguez M."/>
            <person name="Hoffman J."/>
            <person name="Till S."/>
            <person name="Granat S."/>
            <person name="Shohdy N."/>
            <person name="Hasegawa A."/>
            <person name="Hameed A."/>
            <person name="Lodhi M."/>
            <person name="Johnson A."/>
            <person name="Chen E."/>
            <person name="Marra M.A."/>
            <person name="Martienssen R."/>
            <person name="McCombie W.R."/>
        </authorList>
    </citation>
    <scope>NUCLEOTIDE SEQUENCE [LARGE SCALE GENOMIC DNA]</scope>
    <source>
        <strain>cv. Columbia</strain>
    </source>
</reference>
<reference key="3">
    <citation type="journal article" date="2017" name="Plant J.">
        <title>Araport11: a complete reannotation of the Arabidopsis thaliana reference genome.</title>
        <authorList>
            <person name="Cheng C.Y."/>
            <person name="Krishnakumar V."/>
            <person name="Chan A.P."/>
            <person name="Thibaud-Nissen F."/>
            <person name="Schobel S."/>
            <person name="Town C.D."/>
        </authorList>
    </citation>
    <scope>GENOME REANNOTATION</scope>
    <source>
        <strain>cv. Columbia</strain>
    </source>
</reference>
<reference key="4">
    <citation type="journal article" date="1998" name="FEBS Lett.">
        <title>Computational analyses and annotations of the Arabidopsis peroxidase gene family.</title>
        <authorList>
            <person name="Oestergaard L."/>
            <person name="Pedersen A.G."/>
            <person name="Jespersen H.M."/>
            <person name="Brunak S."/>
            <person name="Welinder K.G."/>
        </authorList>
    </citation>
    <scope>CHARACTERIZATION</scope>
    <source>
        <strain>cv. Columbia</strain>
    </source>
</reference>
<reference key="5">
    <citation type="journal article" date="2002" name="Gene">
        <title>Analysis and expression of the class III peroxidase large gene family in Arabidopsis thaliana.</title>
        <authorList>
            <person name="Tognolli M."/>
            <person name="Penel C."/>
            <person name="Greppin H."/>
            <person name="Simon P."/>
        </authorList>
    </citation>
    <scope>GENE FAMILY ORGANIZATION</scope>
    <scope>NOMENCLATURE</scope>
    <source>
        <strain>cv. Columbia</strain>
    </source>
</reference>
<feature type="signal peptide" evidence="1">
    <location>
        <begin position="1"/>
        <end position="23"/>
    </location>
</feature>
<feature type="chain" id="PRO_0000023705" description="Peroxidase 39">
    <location>
        <begin position="24"/>
        <end position="326"/>
    </location>
</feature>
<feature type="active site" description="Proton acceptor" evidence="2 3">
    <location>
        <position position="65"/>
    </location>
</feature>
<feature type="binding site" evidence="2">
    <location>
        <position position="66"/>
    </location>
    <ligand>
        <name>Ca(2+)</name>
        <dbReference type="ChEBI" id="CHEBI:29108"/>
        <label>1</label>
    </ligand>
</feature>
<feature type="binding site" evidence="2">
    <location>
        <position position="69"/>
    </location>
    <ligand>
        <name>Ca(2+)</name>
        <dbReference type="ChEBI" id="CHEBI:29108"/>
        <label>1</label>
    </ligand>
</feature>
<feature type="binding site" evidence="2">
    <location>
        <position position="71"/>
    </location>
    <ligand>
        <name>Ca(2+)</name>
        <dbReference type="ChEBI" id="CHEBI:29108"/>
        <label>1</label>
    </ligand>
</feature>
<feature type="binding site" evidence="2">
    <location>
        <position position="73"/>
    </location>
    <ligand>
        <name>Ca(2+)</name>
        <dbReference type="ChEBI" id="CHEBI:29108"/>
        <label>1</label>
    </ligand>
</feature>
<feature type="binding site" evidence="2">
    <location>
        <position position="75"/>
    </location>
    <ligand>
        <name>Ca(2+)</name>
        <dbReference type="ChEBI" id="CHEBI:29108"/>
        <label>1</label>
    </ligand>
</feature>
<feature type="binding site" evidence="2">
    <location>
        <position position="162"/>
    </location>
    <ligand>
        <name>substrate</name>
    </ligand>
</feature>
<feature type="binding site" description="axial binding residue" evidence="2">
    <location>
        <position position="192"/>
    </location>
    <ligand>
        <name>heme b</name>
        <dbReference type="ChEBI" id="CHEBI:60344"/>
    </ligand>
    <ligandPart>
        <name>Fe</name>
        <dbReference type="ChEBI" id="CHEBI:18248"/>
    </ligandPart>
</feature>
<feature type="binding site" evidence="2">
    <location>
        <position position="193"/>
    </location>
    <ligand>
        <name>Ca(2+)</name>
        <dbReference type="ChEBI" id="CHEBI:29108"/>
        <label>2</label>
    </ligand>
</feature>
<feature type="binding site" evidence="2">
    <location>
        <position position="245"/>
    </location>
    <ligand>
        <name>Ca(2+)</name>
        <dbReference type="ChEBI" id="CHEBI:29108"/>
        <label>2</label>
    </ligand>
</feature>
<feature type="binding site" evidence="2">
    <location>
        <position position="248"/>
    </location>
    <ligand>
        <name>Ca(2+)</name>
        <dbReference type="ChEBI" id="CHEBI:29108"/>
        <label>2</label>
    </ligand>
</feature>
<feature type="binding site" evidence="2">
    <location>
        <position position="253"/>
    </location>
    <ligand>
        <name>Ca(2+)</name>
        <dbReference type="ChEBI" id="CHEBI:29108"/>
        <label>2</label>
    </ligand>
</feature>
<feature type="site" description="Transition state stabilizer" evidence="2">
    <location>
        <position position="61"/>
    </location>
</feature>
<feature type="glycosylation site" description="N-linked (GlcNAc...) asparagine" evidence="1">
    <location>
        <position position="79"/>
    </location>
</feature>
<feature type="glycosylation site" description="N-linked (GlcNAc...) asparagine" evidence="1">
    <location>
        <position position="167"/>
    </location>
</feature>
<feature type="glycosylation site" description="N-linked (GlcNAc...) asparagine" evidence="1">
    <location>
        <position position="208"/>
    </location>
</feature>
<feature type="glycosylation site" description="N-linked (GlcNAc...) asparagine" evidence="1">
    <location>
        <position position="238"/>
    </location>
</feature>
<feature type="disulfide bond" evidence="2">
    <location>
        <begin position="34"/>
        <end position="114"/>
    </location>
</feature>
<feature type="disulfide bond" evidence="2">
    <location>
        <begin position="67"/>
        <end position="72"/>
    </location>
</feature>
<feature type="disulfide bond" evidence="2">
    <location>
        <begin position="120"/>
        <end position="322"/>
    </location>
</feature>
<feature type="disulfide bond" evidence="2">
    <location>
        <begin position="199"/>
        <end position="232"/>
    </location>
</feature>
<feature type="sequence conflict" description="In Ref. 1." evidence="4" ref="1">
    <original>L</original>
    <variation>F</variation>
    <location>
        <position position="17"/>
    </location>
</feature>
<feature type="sequence conflict" description="In Ref. 1." evidence="4" ref="1">
    <original>T</original>
    <variation>I</variation>
    <location>
        <position position="19"/>
    </location>
</feature>
<name>PER39_ARATH</name>
<proteinExistence type="evidence at protein level"/>
<sequence>MTRFGLALLMILVIQGLVTFSEAQLKMGFYDQTCPYAEKIVQDVVNQHINNAPSLAAGLIRMHFHDCFVRGCDGSILINATSSNQQVEKLAPPNLTVRGFDFIDKVKSALESKCPGIVSCADIITLATRDSIVAIGGPTWNVPTGRRDGRISNFAEAMNNIPPPFGNFTTLITLFGNQGLDVKDLVLLSGAHTIGVSHCSSFSNRLFNFTGVGDQDPSLDSEYADNLKSRRCLSIADNTTKVEMDPGSRNTFDLSYYRLVLKRRGLFESDAALTMNPAALAQVKRFAGGSEQEFFAEFSNSMEKMGRIGVKTGSDGEIRRTCAFVN</sequence>
<evidence type="ECO:0000255" key="1"/>
<evidence type="ECO:0000255" key="2">
    <source>
        <dbReference type="PROSITE-ProRule" id="PRU00297"/>
    </source>
</evidence>
<evidence type="ECO:0000255" key="3">
    <source>
        <dbReference type="PROSITE-ProRule" id="PRU10012"/>
    </source>
</evidence>
<evidence type="ECO:0000305" key="4"/>
<protein>
    <recommendedName>
        <fullName>Peroxidase 39</fullName>
        <shortName>Atperox P39</shortName>
        <ecNumber>1.11.1.7</ecNumber>
    </recommendedName>
    <alternativeName>
        <fullName>ATP19a</fullName>
    </alternativeName>
</protein>
<comment type="function">
    <text>Removal of H(2)O(2), oxidation of toxic reductants, biosynthesis and degradation of lignin, suberization, auxin catabolism, response to environmental stresses such as wounding, pathogen attack and oxidative stress. These functions might be dependent on each isozyme/isoform in each plant tissue.</text>
</comment>
<comment type="catalytic activity">
    <reaction>
        <text>2 a phenolic donor + H2O2 = 2 a phenolic radical donor + 2 H2O</text>
        <dbReference type="Rhea" id="RHEA:56136"/>
        <dbReference type="ChEBI" id="CHEBI:15377"/>
        <dbReference type="ChEBI" id="CHEBI:16240"/>
        <dbReference type="ChEBI" id="CHEBI:139520"/>
        <dbReference type="ChEBI" id="CHEBI:139521"/>
        <dbReference type="EC" id="1.11.1.7"/>
    </reaction>
</comment>
<comment type="cofactor">
    <cofactor evidence="2">
        <name>heme b</name>
        <dbReference type="ChEBI" id="CHEBI:60344"/>
    </cofactor>
    <text evidence="2">Binds 1 heme b (iron(II)-protoporphyrin IX) group per subunit.</text>
</comment>
<comment type="cofactor">
    <cofactor evidence="2">
        <name>Ca(2+)</name>
        <dbReference type="ChEBI" id="CHEBI:29108"/>
    </cofactor>
    <text evidence="2">Binds 2 calcium ions per subunit.</text>
</comment>
<comment type="subcellular location">
    <subcellularLocation>
        <location evidence="2">Secreted</location>
    </subcellularLocation>
</comment>
<comment type="tissue specificity">
    <text>Slightly expressed in roots.</text>
</comment>
<comment type="miscellaneous">
    <text>There are 73 peroxidase genes in A.thaliana.</text>
</comment>
<comment type="similarity">
    <text evidence="2">Belongs to the peroxidase family. Classical plant (class III) peroxidase subfamily.</text>
</comment>
<keyword id="KW-0106">Calcium</keyword>
<keyword id="KW-1015">Disulfide bond</keyword>
<keyword id="KW-0325">Glycoprotein</keyword>
<keyword id="KW-0349">Heme</keyword>
<keyword id="KW-0376">Hydrogen peroxide</keyword>
<keyword id="KW-0408">Iron</keyword>
<keyword id="KW-0479">Metal-binding</keyword>
<keyword id="KW-0560">Oxidoreductase</keyword>
<keyword id="KW-0575">Peroxidase</keyword>
<keyword id="KW-1185">Reference proteome</keyword>
<keyword id="KW-0964">Secreted</keyword>
<keyword id="KW-0732">Signal</keyword>
<dbReference type="EC" id="1.11.1.7"/>
<dbReference type="EMBL" id="X98805">
    <property type="protein sequence ID" value="CAA67337.1"/>
    <property type="molecule type" value="mRNA"/>
</dbReference>
<dbReference type="EMBL" id="AL096882">
    <property type="protein sequence ID" value="CAB51413.1"/>
    <property type="molecule type" value="Genomic_DNA"/>
</dbReference>
<dbReference type="EMBL" id="AL161531">
    <property type="protein sequence ID" value="CAB81230.1"/>
    <property type="molecule type" value="Genomic_DNA"/>
</dbReference>
<dbReference type="EMBL" id="CP002687">
    <property type="protein sequence ID" value="AEE82993.1"/>
    <property type="molecule type" value="Genomic_DNA"/>
</dbReference>
<dbReference type="PIR" id="T13020">
    <property type="entry name" value="T13020"/>
</dbReference>
<dbReference type="RefSeq" id="NP_192868.1">
    <property type="nucleotide sequence ID" value="NM_117200.4"/>
</dbReference>
<dbReference type="SMR" id="Q9SUT2"/>
<dbReference type="FunCoup" id="Q9SUT2">
    <property type="interactions" value="130"/>
</dbReference>
<dbReference type="STRING" id="3702.Q9SUT2"/>
<dbReference type="PeroxiBase" id="205">
    <property type="entry name" value="AtPrx39"/>
</dbReference>
<dbReference type="GlyCosmos" id="Q9SUT2">
    <property type="glycosylation" value="4 sites, No reported glycans"/>
</dbReference>
<dbReference type="GlyGen" id="Q9SUT2">
    <property type="glycosylation" value="4 sites"/>
</dbReference>
<dbReference type="PaxDb" id="3702-AT4G11290.1"/>
<dbReference type="ProteomicsDB" id="236415"/>
<dbReference type="EnsemblPlants" id="AT4G11290.1">
    <property type="protein sequence ID" value="AT4G11290.1"/>
    <property type="gene ID" value="AT4G11290"/>
</dbReference>
<dbReference type="GeneID" id="826731"/>
<dbReference type="Gramene" id="AT4G11290.1">
    <property type="protein sequence ID" value="AT4G11290.1"/>
    <property type="gene ID" value="AT4G11290"/>
</dbReference>
<dbReference type="KEGG" id="ath:AT4G11290"/>
<dbReference type="Araport" id="AT4G11290"/>
<dbReference type="TAIR" id="AT4G11290"/>
<dbReference type="eggNOG" id="ENOG502QRTP">
    <property type="taxonomic scope" value="Eukaryota"/>
</dbReference>
<dbReference type="HOGENOM" id="CLU_010543_0_3_1"/>
<dbReference type="InParanoid" id="Q9SUT2"/>
<dbReference type="OMA" id="QDVVNQH"/>
<dbReference type="OrthoDB" id="2113341at2759"/>
<dbReference type="PhylomeDB" id="Q9SUT2"/>
<dbReference type="BioCyc" id="ARA:AT4G11290-MONOMER"/>
<dbReference type="PRO" id="PR:Q9SUT2"/>
<dbReference type="Proteomes" id="UP000006548">
    <property type="component" value="Chromosome 4"/>
</dbReference>
<dbReference type="ExpressionAtlas" id="Q9SUT2">
    <property type="expression patterns" value="baseline and differential"/>
</dbReference>
<dbReference type="GO" id="GO:0005576">
    <property type="term" value="C:extracellular region"/>
    <property type="evidence" value="ECO:0007669"/>
    <property type="project" value="UniProtKB-SubCell"/>
</dbReference>
<dbReference type="GO" id="GO:0099503">
    <property type="term" value="C:secretory vesicle"/>
    <property type="evidence" value="ECO:0007005"/>
    <property type="project" value="TAIR"/>
</dbReference>
<dbReference type="GO" id="GO:0020037">
    <property type="term" value="F:heme binding"/>
    <property type="evidence" value="ECO:0007669"/>
    <property type="project" value="InterPro"/>
</dbReference>
<dbReference type="GO" id="GO:0140825">
    <property type="term" value="F:lactoperoxidase activity"/>
    <property type="evidence" value="ECO:0007669"/>
    <property type="project" value="UniProtKB-EC"/>
</dbReference>
<dbReference type="GO" id="GO:0046872">
    <property type="term" value="F:metal ion binding"/>
    <property type="evidence" value="ECO:0007669"/>
    <property type="project" value="UniProtKB-KW"/>
</dbReference>
<dbReference type="GO" id="GO:0042744">
    <property type="term" value="P:hydrogen peroxide catabolic process"/>
    <property type="evidence" value="ECO:0007669"/>
    <property type="project" value="UniProtKB-KW"/>
</dbReference>
<dbReference type="GO" id="GO:0006979">
    <property type="term" value="P:response to oxidative stress"/>
    <property type="evidence" value="ECO:0007669"/>
    <property type="project" value="InterPro"/>
</dbReference>
<dbReference type="CDD" id="cd00693">
    <property type="entry name" value="secretory_peroxidase"/>
    <property type="match status" value="1"/>
</dbReference>
<dbReference type="FunFam" id="1.10.420.10:FF:000008">
    <property type="entry name" value="Peroxidase"/>
    <property type="match status" value="1"/>
</dbReference>
<dbReference type="FunFam" id="1.10.520.10:FF:000001">
    <property type="entry name" value="Peroxidase"/>
    <property type="match status" value="1"/>
</dbReference>
<dbReference type="Gene3D" id="1.10.520.10">
    <property type="match status" value="1"/>
</dbReference>
<dbReference type="Gene3D" id="1.10.420.10">
    <property type="entry name" value="Peroxidase, domain 2"/>
    <property type="match status" value="1"/>
</dbReference>
<dbReference type="InterPro" id="IPR002016">
    <property type="entry name" value="Haem_peroxidase"/>
</dbReference>
<dbReference type="InterPro" id="IPR010255">
    <property type="entry name" value="Haem_peroxidase_sf"/>
</dbReference>
<dbReference type="InterPro" id="IPR000823">
    <property type="entry name" value="Peroxidase_pln"/>
</dbReference>
<dbReference type="InterPro" id="IPR019794">
    <property type="entry name" value="Peroxidases_AS"/>
</dbReference>
<dbReference type="InterPro" id="IPR019793">
    <property type="entry name" value="Peroxidases_heam-ligand_BS"/>
</dbReference>
<dbReference type="InterPro" id="IPR033905">
    <property type="entry name" value="Secretory_peroxidase"/>
</dbReference>
<dbReference type="PANTHER" id="PTHR31235">
    <property type="entry name" value="PEROXIDASE 25-RELATED"/>
    <property type="match status" value="1"/>
</dbReference>
<dbReference type="Pfam" id="PF00141">
    <property type="entry name" value="peroxidase"/>
    <property type="match status" value="1"/>
</dbReference>
<dbReference type="PRINTS" id="PR00458">
    <property type="entry name" value="PEROXIDASE"/>
</dbReference>
<dbReference type="PRINTS" id="PR00461">
    <property type="entry name" value="PLPEROXIDASE"/>
</dbReference>
<dbReference type="SUPFAM" id="SSF48113">
    <property type="entry name" value="Heme-dependent peroxidases"/>
    <property type="match status" value="1"/>
</dbReference>
<dbReference type="PROSITE" id="PS00435">
    <property type="entry name" value="PEROXIDASE_1"/>
    <property type="match status" value="1"/>
</dbReference>
<dbReference type="PROSITE" id="PS00436">
    <property type="entry name" value="PEROXIDASE_2"/>
    <property type="match status" value="1"/>
</dbReference>
<dbReference type="PROSITE" id="PS50873">
    <property type="entry name" value="PEROXIDASE_4"/>
    <property type="match status" value="1"/>
</dbReference>
<organism>
    <name type="scientific">Arabidopsis thaliana</name>
    <name type="common">Mouse-ear cress</name>
    <dbReference type="NCBI Taxonomy" id="3702"/>
    <lineage>
        <taxon>Eukaryota</taxon>
        <taxon>Viridiplantae</taxon>
        <taxon>Streptophyta</taxon>
        <taxon>Embryophyta</taxon>
        <taxon>Tracheophyta</taxon>
        <taxon>Spermatophyta</taxon>
        <taxon>Magnoliopsida</taxon>
        <taxon>eudicotyledons</taxon>
        <taxon>Gunneridae</taxon>
        <taxon>Pentapetalae</taxon>
        <taxon>rosids</taxon>
        <taxon>malvids</taxon>
        <taxon>Brassicales</taxon>
        <taxon>Brassicaceae</taxon>
        <taxon>Camelineae</taxon>
        <taxon>Arabidopsis</taxon>
    </lineage>
</organism>